<gene>
    <name type="primary">CNOT2</name>
    <name type="synonym">CDC36</name>
    <name type="synonym">NOT2</name>
    <name type="ORF">HSPC131</name>
    <name type="ORF">MSTP046</name>
</gene>
<sequence length="540" mass="59738">MVRTDGHTLSEKRNYQVTNSMFGASRKKFVEGVDSDYHDENMYYSQSSMFPHRSEKDMLASPSTSGQLSQFGASLYGQQSALGLPMRGMSNNTPQLNRSLSQGTQLPSHVTPTTGVPTMSLHTPPSPSRGILPMNPRNMMNHSQVGQGIGIPSRTNSMSSSGLGSPNRSSPSIICMPKQQPSRQPFTVNSMSGFGMNRNQAFGMNNSLSSNIFNGTDGSENVTGLDLSDFPALADRNRREGSGNPTPLINPLAGRAPYVGMVTKPANEQSQDFSIHNEDFPALPGSSYKDPTSSNDDSKSNLNTSGKTTSSTDGPKFPGDKSSTTQNNNQQKKGIQVLPDGRVTNIPQGMVTDQFGMIGLLTFIRAAETDPGMVHLALGSDLTTLGLNLNSPENLYPKFASPWASSPCRPQDIDFHVPSEYLTNIHIRDKLAAIKLGRYGEDLLFYLYYMNGGDVLQLLAAVELFNRDWRYHKEERVWITRAPGMEPTMKTNTYERGTYYFFDCLNWRKVAKEFHLEYDKLEERPHLPSTFNYNPAQQAF</sequence>
<accession>Q9NZN8</accession>
<accession>Q9H3E0</accession>
<accession>Q9NSX5</accession>
<accession>Q9NWR6</accession>
<accession>Q9P028</accession>
<protein>
    <recommendedName>
        <fullName>CCR4-NOT transcription complex subunit 2</fullName>
    </recommendedName>
    <alternativeName>
        <fullName>CCR4-associated factor 2</fullName>
    </alternativeName>
</protein>
<comment type="function">
    <text evidence="4 5 7 8">Component of the CCR4-NOT complex which is one of the major cellular mRNA deadenylases and is linked to various cellular processes including bulk mRNA degradation, miRNA-mediated repression, translational repression during translational initiation and general transcription regulation. Additional complex functions may be a consequence of its influence on mRNA expression. Required for the CCR4-NOT complex structural integrity. Can repress transcription and may link the CCR4-NOT complex to transcriptional regulation; the repressive function may specifically involve the N-Cor repressor complex containing HDAC3, NCOR1 and NCOR2. Involved in the maintenance of embryonic stem (ES) cell identity.</text>
</comment>
<comment type="subunit">
    <text evidence="3 5 6 7">Component of the CCR4-NOT complex; distinct complexes seem to exist that differ in the participation of probably mutually exclusive catalytic subunits. In the complex interacts directly with CNOT3. Interacts with NCOR1, NCOR2. HDAC3 and GPS2.</text>
</comment>
<comment type="interaction">
    <interactant intactId="EBI-743033">
        <id>Q9NZN8</id>
    </interactant>
    <interactant intactId="EBI-6425121">
        <id>Q96C12</id>
        <label>ARMC5</label>
    </interactant>
    <organismsDiffer>false</organismsDiffer>
    <experiments>3</experiments>
</comment>
<comment type="interaction">
    <interactant intactId="EBI-743033">
        <id>Q9NZN8</id>
    </interactant>
    <interactant intactId="EBI-765407">
        <id>P41182</id>
        <label>BCL6</label>
    </interactant>
    <organismsDiffer>false</organismsDiffer>
    <experiments>3</experiments>
</comment>
<comment type="interaction">
    <interactant intactId="EBI-743033">
        <id>Q9NZN8</id>
    </interactant>
    <interactant intactId="EBI-7162175">
        <id>Q9HBH7</id>
        <label>BEX1</label>
    </interactant>
    <organismsDiffer>false</organismsDiffer>
    <experiments>3</experiments>
</comment>
<comment type="interaction">
    <interactant intactId="EBI-743033">
        <id>Q9NZN8</id>
    </interactant>
    <interactant intactId="EBI-10175300">
        <id>Q8TD31-3</id>
        <label>CCHCR1</label>
    </interactant>
    <organismsDiffer>false</organismsDiffer>
    <experiments>3</experiments>
</comment>
<comment type="interaction">
    <interactant intactId="EBI-743033">
        <id>Q9NZN8</id>
    </interactant>
    <interactant intactId="EBI-718615">
        <id>Q9H5F2</id>
        <label>CFAP68</label>
    </interactant>
    <organismsDiffer>false</organismsDiffer>
    <experiments>3</experiments>
</comment>
<comment type="interaction">
    <interactant intactId="EBI-743033">
        <id>Q9NZN8</id>
    </interactant>
    <interactant intactId="EBI-12155483">
        <id>Q9H1P6</id>
        <label>CIMIP1</label>
    </interactant>
    <organismsDiffer>false</organismsDiffer>
    <experiments>3</experiments>
</comment>
<comment type="interaction">
    <interactant intactId="EBI-743033">
        <id>Q9NZN8</id>
    </interactant>
    <interactant intactId="EBI-1222758">
        <id>A5YKK6</id>
        <label>CNOT1</label>
    </interactant>
    <organismsDiffer>false</organismsDiffer>
    <experiments>5</experiments>
</comment>
<comment type="interaction">
    <interactant intactId="EBI-743033">
        <id>Q9NZN8</id>
    </interactant>
    <interactant intactId="EBI-743073">
        <id>O75175</id>
        <label>CNOT3</label>
    </interactant>
    <organismsDiffer>false</organismsDiffer>
    <experiments>12</experiments>
</comment>
<comment type="interaction">
    <interactant intactId="EBI-743033">
        <id>Q9NZN8</id>
    </interactant>
    <interactant intactId="EBI-1046635">
        <id>Q96LI5</id>
        <label>CNOT6L</label>
    </interactant>
    <organismsDiffer>false</organismsDiffer>
    <experiments>4</experiments>
</comment>
<comment type="interaction">
    <interactant intactId="EBI-743033">
        <id>Q9NZN8</id>
    </interactant>
    <interactant intactId="EBI-742299">
        <id>Q9UFF9</id>
        <label>CNOT8</label>
    </interactant>
    <organismsDiffer>false</organismsDiffer>
    <experiments>3</experiments>
</comment>
<comment type="interaction">
    <interactant intactId="EBI-743033">
        <id>Q9NZN8</id>
    </interactant>
    <interactant intactId="EBI-711360">
        <id>P33240</id>
        <label>CSTF2</label>
    </interactant>
    <organismsDiffer>false</organismsDiffer>
    <experiments>3</experiments>
</comment>
<comment type="interaction">
    <interactant intactId="EBI-743033">
        <id>Q9NZN8</id>
    </interactant>
    <interactant intactId="EBI-23893155">
        <id>F2Z2M7</id>
        <label>GALNT10</label>
    </interactant>
    <organismsDiffer>false</organismsDiffer>
    <experiments>3</experiments>
</comment>
<comment type="interaction">
    <interactant intactId="EBI-743033">
        <id>Q9NZN8</id>
    </interactant>
    <interactant intactId="EBI-10267082">
        <id>Q8N6F7</id>
        <label>GCSAM</label>
    </interactant>
    <organismsDiffer>false</organismsDiffer>
    <experiments>3</experiments>
</comment>
<comment type="interaction">
    <interactant intactId="EBI-743033">
        <id>Q9NZN8</id>
    </interactant>
    <interactant intactId="EBI-10983983">
        <id>Q13098-7</id>
        <label>GPS1</label>
    </interactant>
    <organismsDiffer>false</organismsDiffer>
    <experiments>3</experiments>
</comment>
<comment type="interaction">
    <interactant intactId="EBI-743033">
        <id>Q9NZN8</id>
    </interactant>
    <interactant intactId="EBI-7116203">
        <id>O75031</id>
        <label>HSF2BP</label>
    </interactant>
    <organismsDiffer>false</organismsDiffer>
    <experiments>3</experiments>
</comment>
<comment type="interaction">
    <interactant intactId="EBI-743033">
        <id>Q9NZN8</id>
    </interactant>
    <interactant intactId="EBI-2824497">
        <id>Q9H019</id>
        <label>MTFR1L</label>
    </interactant>
    <organismsDiffer>false</organismsDiffer>
    <experiments>3</experiments>
</comment>
<comment type="interaction">
    <interactant intactId="EBI-743033">
        <id>Q9NZN8</id>
    </interactant>
    <interactant intactId="EBI-11986293">
        <id>P0CG20</id>
        <label>PRR35</label>
    </interactant>
    <organismsDiffer>false</organismsDiffer>
    <experiments>3</experiments>
</comment>
<comment type="interaction">
    <interactant intactId="EBI-743033">
        <id>Q9NZN8</id>
    </interactant>
    <interactant intactId="EBI-603350">
        <id>P28070</id>
        <label>PSMB4</label>
    </interactant>
    <organismsDiffer>false</organismsDiffer>
    <experiments>3</experiments>
</comment>
<comment type="interaction">
    <interactant intactId="EBI-743033">
        <id>Q9NZN8</id>
    </interactant>
    <interactant intactId="EBI-296739">
        <id>P63244</id>
        <label>RACK1</label>
    </interactant>
    <organismsDiffer>false</organismsDiffer>
    <experiments>3</experiments>
</comment>
<comment type="interaction">
    <interactant intactId="EBI-743033">
        <id>Q9NZN8</id>
    </interactant>
    <interactant intactId="EBI-2853051">
        <id>Q13207</id>
        <label>TBX2</label>
    </interactant>
    <organismsDiffer>false</organismsDiffer>
    <experiments>3</experiments>
</comment>
<comment type="interaction">
    <interactant intactId="EBI-743033">
        <id>Q9NZN8</id>
    </interactant>
    <interactant intactId="EBI-8644516">
        <id>Q9BXF9</id>
        <label>TEKT3</label>
    </interactant>
    <organismsDiffer>false</organismsDiffer>
    <experiments>3</experiments>
</comment>
<comment type="interaction">
    <interactant intactId="EBI-743033">
        <id>Q9NZN8</id>
    </interactant>
    <interactant intactId="EBI-6507625">
        <id>Q9HCJ0</id>
        <label>TNRC6C</label>
    </interactant>
    <organismsDiffer>false</organismsDiffer>
    <experiments>4</experiments>
</comment>
<comment type="interaction">
    <interactant intactId="EBI-743033">
        <id>Q9NZN8</id>
    </interactant>
    <interactant intactId="EBI-723281">
        <id>P50616</id>
        <label>TOB1</label>
    </interactant>
    <organismsDiffer>false</organismsDiffer>
    <experiments>3</experiments>
</comment>
<comment type="interaction">
    <interactant intactId="EBI-743033">
        <id>Q9NZN8</id>
    </interactant>
    <interactant intactId="EBI-10237226">
        <id>Q15911-2</id>
        <label>ZFHX3</label>
    </interactant>
    <organismsDiffer>false</organismsDiffer>
    <experiments>3</experiments>
</comment>
<comment type="subcellular location">
    <subcellularLocation>
        <location evidence="7">Cytoplasm</location>
    </subcellularLocation>
    <subcellularLocation>
        <location evidence="15">Nucleus</location>
    </subcellularLocation>
</comment>
<comment type="alternative products">
    <event type="alternative splicing"/>
    <isoform>
        <id>Q9NZN8-1</id>
        <name>1</name>
        <sequence type="displayed"/>
    </isoform>
    <isoform>
        <id>Q9NZN8-2</id>
        <name>2</name>
        <sequence type="described" ref="VSP_009912"/>
    </isoform>
    <isoform>
        <id>Q9NZN8-3</id>
        <name>3</name>
        <sequence type="described" ref="VSP_009913"/>
    </isoform>
    <isoform>
        <id>Q9NZN8-4</id>
        <name>4</name>
        <sequence type="described" ref="VSP_009915 VSP_009916"/>
    </isoform>
    <isoform>
        <id>Q9NZN8-5</id>
        <name>5</name>
        <sequence type="described" ref="VSP_009914"/>
    </isoform>
</comment>
<comment type="tissue specificity">
    <text evidence="3">Ubiquitous. Highly expressed in brain, heart, thymus, spleen, kidney, liver, small intestine, placenta, lung and peripheral blood leukocytes.</text>
</comment>
<comment type="developmental stage">
    <text evidence="8">Expressed in embryonic stem (ES) cells.</text>
</comment>
<comment type="disease" evidence="9 10">
    <disease id="DI-05672">
        <name>Intellectual developmental disorder with nasal speech, dysmorphic facies, and variable skeletal anomalies</name>
        <acronym>IDNADFS</acronym>
        <description>An autosomal dominant disorder characterized by delayed development, speech delay with nasal speech, and characteristic facial features including upslanted palpebral fissures, anteverted nares, a thin upper lip, and micrognathia. Some patients may have skeletal anomalies, such as brachydactyly, toe syndactyly and flat feet.</description>
        <dbReference type="MIM" id="618608"/>
    </disease>
    <text>The disease is caused by variants affecting the gene represented in this entry.</text>
</comment>
<comment type="miscellaneous">
    <molecule>Isoform 3</molecule>
    <text evidence="14">May be due to an intron retention.</text>
</comment>
<comment type="miscellaneous">
    <molecule>Isoform 4</molecule>
    <text evidence="14">May be due to an intron retention.</text>
</comment>
<comment type="similarity">
    <text evidence="14">Belongs to the CNOT2/3/5 family.</text>
</comment>
<comment type="sequence caution" evidence="14">
    <conflict type="frameshift">
        <sequence resource="EMBL-CDS" id="AAF29095"/>
    </conflict>
</comment>
<comment type="sequence caution" evidence="14">
    <conflict type="frameshift">
        <sequence resource="EMBL-CDS" id="AAQ13426"/>
    </conflict>
</comment>
<evidence type="ECO:0000250" key="1">
    <source>
        <dbReference type="UniProtKB" id="Q8C5L3"/>
    </source>
</evidence>
<evidence type="ECO:0000256" key="2">
    <source>
        <dbReference type="SAM" id="MobiDB-lite"/>
    </source>
</evidence>
<evidence type="ECO:0000269" key="3">
    <source>
    </source>
</evidence>
<evidence type="ECO:0000269" key="4">
    <source>
    </source>
</evidence>
<evidence type="ECO:0000269" key="5">
    <source>
    </source>
</evidence>
<evidence type="ECO:0000269" key="6">
    <source>
    </source>
</evidence>
<evidence type="ECO:0000269" key="7">
    <source>
    </source>
</evidence>
<evidence type="ECO:0000269" key="8">
    <source>
    </source>
</evidence>
<evidence type="ECO:0000269" key="9">
    <source>
    </source>
</evidence>
<evidence type="ECO:0000269" key="10">
    <source>
    </source>
</evidence>
<evidence type="ECO:0000303" key="11">
    <source>
    </source>
</evidence>
<evidence type="ECO:0000303" key="12">
    <source>
    </source>
</evidence>
<evidence type="ECO:0000303" key="13">
    <source ref="2"/>
</evidence>
<evidence type="ECO:0000305" key="14"/>
<evidence type="ECO:0000305" key="15">
    <source>
    </source>
</evidence>
<evidence type="ECO:0007744" key="16">
    <source>
    </source>
</evidence>
<evidence type="ECO:0007744" key="17">
    <source>
    </source>
</evidence>
<evidence type="ECO:0007744" key="18">
    <source>
    </source>
</evidence>
<evidence type="ECO:0007744" key="19">
    <source>
    </source>
</evidence>
<evidence type="ECO:0007744" key="20">
    <source>
    </source>
</evidence>
<evidence type="ECO:0007744" key="21">
    <source>
    </source>
</evidence>
<evidence type="ECO:0007744" key="22">
    <source>
    </source>
</evidence>
<evidence type="ECO:0007829" key="23">
    <source>
        <dbReference type="PDB" id="4C0D"/>
    </source>
</evidence>
<evidence type="ECO:0007829" key="24">
    <source>
        <dbReference type="PDB" id="4C0F"/>
    </source>
</evidence>
<evidence type="ECO:0007829" key="25">
    <source>
        <dbReference type="PDB" id="5FU6"/>
    </source>
</evidence>
<name>CNOT2_HUMAN</name>
<organism>
    <name type="scientific">Homo sapiens</name>
    <name type="common">Human</name>
    <dbReference type="NCBI Taxonomy" id="9606"/>
    <lineage>
        <taxon>Eukaryota</taxon>
        <taxon>Metazoa</taxon>
        <taxon>Chordata</taxon>
        <taxon>Craniata</taxon>
        <taxon>Vertebrata</taxon>
        <taxon>Euteleostomi</taxon>
        <taxon>Mammalia</taxon>
        <taxon>Eutheria</taxon>
        <taxon>Euarchontoglires</taxon>
        <taxon>Primates</taxon>
        <taxon>Haplorrhini</taxon>
        <taxon>Catarrhini</taxon>
        <taxon>Hominidae</taxon>
        <taxon>Homo</taxon>
    </lineage>
</organism>
<keyword id="KW-0002">3D-structure</keyword>
<keyword id="KW-0025">Alternative splicing</keyword>
<keyword id="KW-0963">Cytoplasm</keyword>
<keyword id="KW-0217">Developmental protein</keyword>
<keyword id="KW-0225">Disease variant</keyword>
<keyword id="KW-0991">Intellectual disability</keyword>
<keyword id="KW-0539">Nucleus</keyword>
<keyword id="KW-0597">Phosphoprotein</keyword>
<keyword id="KW-1267">Proteomics identification</keyword>
<keyword id="KW-1185">Reference proteome</keyword>
<keyword id="KW-0678">Repressor</keyword>
<keyword id="KW-0943">RNA-mediated gene silencing</keyword>
<keyword id="KW-0804">Transcription</keyword>
<keyword id="KW-0805">Transcription regulation</keyword>
<keyword id="KW-0810">Translation regulation</keyword>
<reference key="1">
    <citation type="journal article" date="2000" name="Nucleic Acids Res.">
        <title>Isolation and characterization of human orthologs of yeast CCR4-NOT complex subunits.</title>
        <authorList>
            <person name="Albert T.K."/>
            <person name="Lemaire M."/>
            <person name="van Berkum N.L."/>
            <person name="Gentz R."/>
            <person name="Collart M.A."/>
            <person name="Timmers H.T.M."/>
        </authorList>
    </citation>
    <scope>NUCLEOTIDE SEQUENCE [MRNA] (ISOFORM 1)</scope>
    <scope>INTERACTION WITH CNOT1</scope>
    <scope>TISSUE SPECIFICITY</scope>
</reference>
<reference key="2">
    <citation type="submission" date="1998-12" db="EMBL/GenBank/DDBJ databases">
        <authorList>
            <person name="Liu B."/>
            <person name="Liu Y.Q."/>
            <person name="Wang X.Y."/>
            <person name="Zhao B."/>
            <person name="Sheng H."/>
            <person name="Zhao X.W."/>
            <person name="Liu S."/>
            <person name="Xu Y.Y."/>
            <person name="Ye J."/>
            <person name="Song L."/>
            <person name="Gao Y."/>
            <person name="Zhang C.L."/>
            <person name="Zhang J."/>
            <person name="Wei Y.J."/>
            <person name="Cao H.Q."/>
            <person name="Zhao Y."/>
            <person name="Liu L.S."/>
            <person name="Ding J.F."/>
            <person name="Gao R.L."/>
            <person name="Wu Q.Y."/>
            <person name="Qiang B.Q."/>
            <person name="Yuan J.G."/>
            <person name="Liew C.C."/>
            <person name="Zhao M.S."/>
            <person name="Hui R.T."/>
        </authorList>
    </citation>
    <scope>NUCLEOTIDE SEQUENCE [LARGE SCALE MRNA] (ISOFORM 2)</scope>
    <source>
        <tissue>Heart</tissue>
    </source>
</reference>
<reference key="3">
    <citation type="journal article" date="2000" name="Genome Res.">
        <title>Cloning and functional analysis of cDNAs with open reading frames for 300 previously undefined genes expressed in CD34+ hematopoietic stem/progenitor cells.</title>
        <authorList>
            <person name="Zhang Q.-H."/>
            <person name="Ye M."/>
            <person name="Wu X.-Y."/>
            <person name="Ren S.-X."/>
            <person name="Zhao M."/>
            <person name="Zhao C.-J."/>
            <person name="Fu G."/>
            <person name="Shen Y."/>
            <person name="Fan H.-Y."/>
            <person name="Lu G."/>
            <person name="Zhong M."/>
            <person name="Xu X.-R."/>
            <person name="Han Z.-G."/>
            <person name="Zhang J.-W."/>
            <person name="Tao J."/>
            <person name="Huang Q.-H."/>
            <person name="Zhou J."/>
            <person name="Hu G.-X."/>
            <person name="Gu J."/>
            <person name="Chen S.-J."/>
            <person name="Chen Z."/>
        </authorList>
    </citation>
    <scope>NUCLEOTIDE SEQUENCE [LARGE SCALE MRNA] (ISOFORM 1)</scope>
    <source>
        <tissue>Umbilical cord blood</tissue>
    </source>
</reference>
<reference key="4">
    <citation type="journal article" date="2004" name="Nat. Genet.">
        <title>Complete sequencing and characterization of 21,243 full-length human cDNAs.</title>
        <authorList>
            <person name="Ota T."/>
            <person name="Suzuki Y."/>
            <person name="Nishikawa T."/>
            <person name="Otsuki T."/>
            <person name="Sugiyama T."/>
            <person name="Irie R."/>
            <person name="Wakamatsu A."/>
            <person name="Hayashi K."/>
            <person name="Sato H."/>
            <person name="Nagai K."/>
            <person name="Kimura K."/>
            <person name="Makita H."/>
            <person name="Sekine M."/>
            <person name="Obayashi M."/>
            <person name="Nishi T."/>
            <person name="Shibahara T."/>
            <person name="Tanaka T."/>
            <person name="Ishii S."/>
            <person name="Yamamoto J."/>
            <person name="Saito K."/>
            <person name="Kawai Y."/>
            <person name="Isono Y."/>
            <person name="Nakamura Y."/>
            <person name="Nagahari K."/>
            <person name="Murakami K."/>
            <person name="Yasuda T."/>
            <person name="Iwayanagi T."/>
            <person name="Wagatsuma M."/>
            <person name="Shiratori A."/>
            <person name="Sudo H."/>
            <person name="Hosoiri T."/>
            <person name="Kaku Y."/>
            <person name="Kodaira H."/>
            <person name="Kondo H."/>
            <person name="Sugawara M."/>
            <person name="Takahashi M."/>
            <person name="Kanda K."/>
            <person name="Yokoi T."/>
            <person name="Furuya T."/>
            <person name="Kikkawa E."/>
            <person name="Omura Y."/>
            <person name="Abe K."/>
            <person name="Kamihara K."/>
            <person name="Katsuta N."/>
            <person name="Sato K."/>
            <person name="Tanikawa M."/>
            <person name="Yamazaki M."/>
            <person name="Ninomiya K."/>
            <person name="Ishibashi T."/>
            <person name="Yamashita H."/>
            <person name="Murakawa K."/>
            <person name="Fujimori K."/>
            <person name="Tanai H."/>
            <person name="Kimata M."/>
            <person name="Watanabe M."/>
            <person name="Hiraoka S."/>
            <person name="Chiba Y."/>
            <person name="Ishida S."/>
            <person name="Ono Y."/>
            <person name="Takiguchi S."/>
            <person name="Watanabe S."/>
            <person name="Yosida M."/>
            <person name="Hotuta T."/>
            <person name="Kusano J."/>
            <person name="Kanehori K."/>
            <person name="Takahashi-Fujii A."/>
            <person name="Hara H."/>
            <person name="Tanase T.-O."/>
            <person name="Nomura Y."/>
            <person name="Togiya S."/>
            <person name="Komai F."/>
            <person name="Hara R."/>
            <person name="Takeuchi K."/>
            <person name="Arita M."/>
            <person name="Imose N."/>
            <person name="Musashino K."/>
            <person name="Yuuki H."/>
            <person name="Oshima A."/>
            <person name="Sasaki N."/>
            <person name="Aotsuka S."/>
            <person name="Yoshikawa Y."/>
            <person name="Matsunawa H."/>
            <person name="Ichihara T."/>
            <person name="Shiohata N."/>
            <person name="Sano S."/>
            <person name="Moriya S."/>
            <person name="Momiyama H."/>
            <person name="Satoh N."/>
            <person name="Takami S."/>
            <person name="Terashima Y."/>
            <person name="Suzuki O."/>
            <person name="Nakagawa S."/>
            <person name="Senoh A."/>
            <person name="Mizoguchi H."/>
            <person name="Goto Y."/>
            <person name="Shimizu F."/>
            <person name="Wakebe H."/>
            <person name="Hishigaki H."/>
            <person name="Watanabe T."/>
            <person name="Sugiyama A."/>
            <person name="Takemoto M."/>
            <person name="Kawakami B."/>
            <person name="Yamazaki M."/>
            <person name="Watanabe K."/>
            <person name="Kumagai A."/>
            <person name="Itakura S."/>
            <person name="Fukuzumi Y."/>
            <person name="Fujimori Y."/>
            <person name="Komiyama M."/>
            <person name="Tashiro H."/>
            <person name="Tanigami A."/>
            <person name="Fujiwara T."/>
            <person name="Ono T."/>
            <person name="Yamada K."/>
            <person name="Fujii Y."/>
            <person name="Ozaki K."/>
            <person name="Hirao M."/>
            <person name="Ohmori Y."/>
            <person name="Kawabata A."/>
            <person name="Hikiji T."/>
            <person name="Kobatake N."/>
            <person name="Inagaki H."/>
            <person name="Ikema Y."/>
            <person name="Okamoto S."/>
            <person name="Okitani R."/>
            <person name="Kawakami T."/>
            <person name="Noguchi S."/>
            <person name="Itoh T."/>
            <person name="Shigeta K."/>
            <person name="Senba T."/>
            <person name="Matsumura K."/>
            <person name="Nakajima Y."/>
            <person name="Mizuno T."/>
            <person name="Morinaga M."/>
            <person name="Sasaki M."/>
            <person name="Togashi T."/>
            <person name="Oyama M."/>
            <person name="Hata H."/>
            <person name="Watanabe M."/>
            <person name="Komatsu T."/>
            <person name="Mizushima-Sugano J."/>
            <person name="Satoh T."/>
            <person name="Shirai Y."/>
            <person name="Takahashi Y."/>
            <person name="Nakagawa K."/>
            <person name="Okumura K."/>
            <person name="Nagase T."/>
            <person name="Nomura N."/>
            <person name="Kikuchi H."/>
            <person name="Masuho Y."/>
            <person name="Yamashita R."/>
            <person name="Nakai K."/>
            <person name="Yada T."/>
            <person name="Nakamura Y."/>
            <person name="Ohara O."/>
            <person name="Isogai T."/>
            <person name="Sugano S."/>
        </authorList>
    </citation>
    <scope>NUCLEOTIDE SEQUENCE [LARGE SCALE MRNA] (ISOFORM 5)</scope>
</reference>
<reference key="5">
    <citation type="journal article" date="2007" name="BMC Genomics">
        <title>The full-ORF clone resource of the German cDNA consortium.</title>
        <authorList>
            <person name="Bechtel S."/>
            <person name="Rosenfelder H."/>
            <person name="Duda A."/>
            <person name="Schmidt C.P."/>
            <person name="Ernst U."/>
            <person name="Wellenreuther R."/>
            <person name="Mehrle A."/>
            <person name="Schuster C."/>
            <person name="Bahr A."/>
            <person name="Bloecker H."/>
            <person name="Heubner D."/>
            <person name="Hoerlein A."/>
            <person name="Michel G."/>
            <person name="Wedler H."/>
            <person name="Koehrer K."/>
            <person name="Ottenwaelder B."/>
            <person name="Poustka A."/>
            <person name="Wiemann S."/>
            <person name="Schupp I."/>
        </authorList>
    </citation>
    <scope>NUCLEOTIDE SEQUENCE [LARGE SCALE MRNA] (ISOFORMS 3 AND 4)</scope>
    <source>
        <tissue>Fetal kidney</tissue>
        <tissue>Testis</tissue>
    </source>
</reference>
<reference key="6">
    <citation type="journal article" date="2004" name="Genome Res.">
        <title>The status, quality, and expansion of the NIH full-length cDNA project: the Mammalian Gene Collection (MGC).</title>
        <authorList>
            <consortium name="The MGC Project Team"/>
        </authorList>
    </citation>
    <scope>NUCLEOTIDE SEQUENCE [LARGE SCALE MRNA] (ISOFORM 1)</scope>
    <source>
        <tissue>Lymph</tissue>
        <tissue>Skin</tissue>
    </source>
</reference>
<reference key="7">
    <citation type="submission" date="1998-01" db="EMBL/GenBank/DDBJ databases">
        <title>Separation and molecular cloning of a novel human cDNA fragment coding a protein without homologs.</title>
        <authorList>
            <person name="Bi A."/>
            <person name="Yu L."/>
            <person name="Zhang M."/>
            <person name="Fan Y."/>
            <person name="Zhang Q."/>
            <person name="Zhao Y."/>
            <person name="Gao J."/>
            <person name="Zhao S."/>
        </authorList>
    </citation>
    <scope>NUCLEOTIDE SEQUENCE [MRNA] OF 1-377</scope>
</reference>
<reference key="8">
    <citation type="journal article" date="2004" name="J. Biol. Chem.">
        <title>Repression of promoter activity by CNOT2, a subunit of the transcription regulatory Ccr4-not complex.</title>
        <authorList>
            <person name="Zwartjes C.G."/>
            <person name="Jayne S."/>
            <person name="van den Berg D.L."/>
            <person name="Timmers H.T."/>
        </authorList>
    </citation>
    <scope>FUNCTION</scope>
    <scope>DOMAIN</scope>
</reference>
<reference key="9">
    <citation type="journal article" date="2006" name="Biochem. J.">
        <title>Involvement of the SMRT/NCoR-HDAC3 complex in transcriptional repression by the CNOT2 subunit of the human Ccr4-Not complex.</title>
        <authorList>
            <person name="Jayne S."/>
            <person name="Zwartjes C.G."/>
            <person name="van Schaik F.M."/>
            <person name="Timmers H.T."/>
        </authorList>
    </citation>
    <scope>FUNCTION</scope>
    <scope>INTERACTION WITH NCOR1; NCOR2; HDAC3 AND GPS2</scope>
</reference>
<reference key="10">
    <citation type="journal article" date="2008" name="Mol. Cell">
        <title>Kinase-selective enrichment enables quantitative phosphoproteomics of the kinome across the cell cycle.</title>
        <authorList>
            <person name="Daub H."/>
            <person name="Olsen J.V."/>
            <person name="Bairlein M."/>
            <person name="Gnad F."/>
            <person name="Oppermann F.S."/>
            <person name="Korner R."/>
            <person name="Greff Z."/>
            <person name="Keri G."/>
            <person name="Stemmann O."/>
            <person name="Mann M."/>
        </authorList>
    </citation>
    <scope>PHOSPHORYLATION [LARGE SCALE ANALYSIS] AT SER-165</scope>
    <scope>IDENTIFICATION BY MASS SPECTROMETRY [LARGE SCALE ANALYSIS]</scope>
    <source>
        <tissue>Cervix carcinoma</tissue>
    </source>
</reference>
<reference key="11">
    <citation type="journal article" date="2008" name="Proc. Natl. Acad. Sci. U.S.A.">
        <title>A quantitative atlas of mitotic phosphorylation.</title>
        <authorList>
            <person name="Dephoure N."/>
            <person name="Zhou C."/>
            <person name="Villen J."/>
            <person name="Beausoleil S.A."/>
            <person name="Bakalarski C.E."/>
            <person name="Elledge S.J."/>
            <person name="Gygi S.P."/>
        </authorList>
    </citation>
    <scope>PHOSPHORYLATION [LARGE SCALE ANALYSIS] AT THR-93; SER-126 AND SER-165</scope>
    <scope>IDENTIFICATION BY MASS SPECTROMETRY [LARGE SCALE ANALYSIS]</scope>
    <source>
        <tissue>Cervix carcinoma</tissue>
    </source>
</reference>
<reference key="12">
    <citation type="journal article" date="2009" name="Anal. Chem.">
        <title>Lys-N and trypsin cover complementary parts of the phosphoproteome in a refined SCX-based approach.</title>
        <authorList>
            <person name="Gauci S."/>
            <person name="Helbig A.O."/>
            <person name="Slijper M."/>
            <person name="Krijgsveld J."/>
            <person name="Heck A.J."/>
            <person name="Mohammed S."/>
        </authorList>
    </citation>
    <scope>IDENTIFICATION BY MASS SPECTROMETRY [LARGE SCALE ANALYSIS]</scope>
</reference>
<reference key="13">
    <citation type="journal article" date="2009" name="Biochem. J.">
        <title>Human Ccr4-Not complexes contain variable deadenylase subunits.</title>
        <authorList>
            <person name="Lau N.C."/>
            <person name="Kolkman A."/>
            <person name="van Schaik F.M."/>
            <person name="Mulder K.W."/>
            <person name="Pijnappel W.W."/>
            <person name="Heck A.J."/>
            <person name="Timmers H.T."/>
        </authorList>
    </citation>
    <scope>IDENTIFICATION IN THE CCR4-NOT COMPLEX</scope>
    <scope>COMPOSITION OF THE CCR4-NOT COMPLEX</scope>
</reference>
<reference key="14">
    <citation type="journal article" date="2009" name="Sci. Signal.">
        <title>Quantitative phosphoproteomic analysis of T cell receptor signaling reveals system-wide modulation of protein-protein interactions.</title>
        <authorList>
            <person name="Mayya V."/>
            <person name="Lundgren D.H."/>
            <person name="Hwang S.-I."/>
            <person name="Rezaul K."/>
            <person name="Wu L."/>
            <person name="Eng J.K."/>
            <person name="Rodionov V."/>
            <person name="Han D.K."/>
        </authorList>
    </citation>
    <scope>PHOSPHORYLATION [LARGE SCALE ANALYSIS] AT SER-126</scope>
    <scope>IDENTIFICATION BY MASS SPECTROMETRY [LARGE SCALE ANALYSIS]</scope>
    <source>
        <tissue>Leukemic T-cell</tissue>
    </source>
</reference>
<reference key="15">
    <citation type="journal article" date="2010" name="Sci. Signal.">
        <title>Quantitative phosphoproteomics reveals widespread full phosphorylation site occupancy during mitosis.</title>
        <authorList>
            <person name="Olsen J.V."/>
            <person name="Vermeulen M."/>
            <person name="Santamaria A."/>
            <person name="Kumar C."/>
            <person name="Miller M.L."/>
            <person name="Jensen L.J."/>
            <person name="Gnad F."/>
            <person name="Cox J."/>
            <person name="Jensen T.S."/>
            <person name="Nigg E.A."/>
            <person name="Brunak S."/>
            <person name="Mann M."/>
        </authorList>
    </citation>
    <scope>PHOSPHORYLATION [LARGE SCALE ANALYSIS] AT SER-165</scope>
    <scope>IDENTIFICATION BY MASS SPECTROMETRY [LARGE SCALE ANALYSIS]</scope>
    <source>
        <tissue>Cervix carcinoma</tissue>
    </source>
</reference>
<reference key="16">
    <citation type="journal article" date="2011" name="BMC Syst. Biol.">
        <title>Initial characterization of the human central proteome.</title>
        <authorList>
            <person name="Burkard T.R."/>
            <person name="Planyavsky M."/>
            <person name="Kaupe I."/>
            <person name="Breitwieser F.P."/>
            <person name="Buerckstuemmer T."/>
            <person name="Bennett K.L."/>
            <person name="Superti-Furga G."/>
            <person name="Colinge J."/>
        </authorList>
    </citation>
    <scope>IDENTIFICATION BY MASS SPECTROMETRY [LARGE SCALE ANALYSIS]</scope>
</reference>
<reference key="17">
    <citation type="journal article" date="2011" name="Genes Cells">
        <title>CNOT2 depletion disrupts and inhibits the CCR4-NOT deadenylase complex and induces apoptotic cell death.</title>
        <authorList>
            <person name="Ito K."/>
            <person name="Inoue T."/>
            <person name="Yokoyama K."/>
            <person name="Morita M."/>
            <person name="Suzuki T."/>
            <person name="Yamamoto T."/>
        </authorList>
    </citation>
    <scope>FUNCTION</scope>
    <scope>INTERACTION WITH CNOT3</scope>
    <scope>SUBCELLULAR LOCATION</scope>
</reference>
<reference key="18">
    <citation type="journal article" date="2011" name="Sci. Signal.">
        <title>System-wide temporal characterization of the proteome and phosphoproteome of human embryonic stem cell differentiation.</title>
        <authorList>
            <person name="Rigbolt K.T."/>
            <person name="Prokhorova T.A."/>
            <person name="Akimov V."/>
            <person name="Henningsen J."/>
            <person name="Johansen P.T."/>
            <person name="Kratchmarova I."/>
            <person name="Kassem M."/>
            <person name="Mann M."/>
            <person name="Olsen J.V."/>
            <person name="Blagoev B."/>
        </authorList>
    </citation>
    <scope>PHOSPHORYLATION [LARGE SCALE ANALYSIS] AT SER-165</scope>
    <scope>IDENTIFICATION BY MASS SPECTROMETRY [LARGE SCALE ANALYSIS]</scope>
</reference>
<reference key="19">
    <citation type="journal article" date="2012" name="Stem Cells">
        <title>Cnot1, Cnot2, and Cnot3 maintain mouse and human ESC identity and inhibit extraembryonic differentiation.</title>
        <authorList>
            <person name="Zheng X."/>
            <person name="Dumitru R."/>
            <person name="Lackford B.L."/>
            <person name="Freudenberg J.M."/>
            <person name="Singh A.P."/>
            <person name="Archer T.K."/>
            <person name="Jothi R."/>
            <person name="Hu G."/>
        </authorList>
    </citation>
    <scope>FUNCTION</scope>
    <scope>DEVELOPMENTAL STAGE</scope>
</reference>
<reference key="20">
    <citation type="journal article" date="2013" name="J. Proteome Res.">
        <title>Toward a comprehensive characterization of a human cancer cell phosphoproteome.</title>
        <authorList>
            <person name="Zhou H."/>
            <person name="Di Palma S."/>
            <person name="Preisinger C."/>
            <person name="Peng M."/>
            <person name="Polat A.N."/>
            <person name="Heck A.J."/>
            <person name="Mohammed S."/>
        </authorList>
    </citation>
    <scope>PHOSPHORYLATION [LARGE SCALE ANALYSIS] AT SER-165 AND SER-242</scope>
    <scope>IDENTIFICATION BY MASS SPECTROMETRY [LARGE SCALE ANALYSIS]</scope>
    <source>
        <tissue>Cervix carcinoma</tissue>
        <tissue>Erythroleukemia</tissue>
    </source>
</reference>
<reference key="21">
    <citation type="journal article" date="2014" name="J. Proteomics">
        <title>An enzyme assisted RP-RPLC approach for in-depth analysis of human liver phosphoproteome.</title>
        <authorList>
            <person name="Bian Y."/>
            <person name="Song C."/>
            <person name="Cheng K."/>
            <person name="Dong M."/>
            <person name="Wang F."/>
            <person name="Huang J."/>
            <person name="Sun D."/>
            <person name="Wang L."/>
            <person name="Ye M."/>
            <person name="Zou H."/>
        </authorList>
    </citation>
    <scope>PHOSPHORYLATION [LARGE SCALE ANALYSIS] AT SER-165 AND SER-274</scope>
    <scope>IDENTIFICATION BY MASS SPECTROMETRY [LARGE SCALE ANALYSIS]</scope>
    <source>
        <tissue>Liver</tissue>
    </source>
</reference>
<reference key="22">
    <citation type="journal article" date="2019" name="Am. J. Med. Genet. A">
        <title>A heterozygous, intragenic deletion of CNOT2 recapitulates the phenotype of 12q15 deletion syndrome.</title>
        <authorList>
            <person name="Alesi V."/>
            <person name="Loddo S."/>
            <person name="Cali F."/>
            <person name="Orlando V."/>
            <person name="Genovese S."/>
            <person name="Ferretti D."/>
            <person name="Calacci C."/>
            <person name="Calvieri G."/>
            <person name="Falasca R."/>
            <person name="Ulgheri L."/>
            <person name="Drago F."/>
            <person name="Dallapiccola B."/>
            <person name="Baban A."/>
            <person name="Novelli A."/>
        </authorList>
    </citation>
    <scope>INVOLVEMENT IN IDNADFS</scope>
</reference>
<reference key="23">
    <citation type="journal article" date="2019" name="Am. J. Med. Genet. A">
        <title>CNOT2 haploinsufficiency causes a neurodevelopmental disorder with characteristic facial features.</title>
        <authorList>
            <person name="Uehara T."/>
            <person name="Tsuchihashi T."/>
            <person name="Yamada M."/>
            <person name="Suzuki H."/>
            <person name="Takenouchi T."/>
            <person name="Kosaki K."/>
        </authorList>
    </citation>
    <scope>VARIANT IDNADFS 316-LYS--PHE-540 DEL</scope>
</reference>
<dbReference type="EMBL" id="AF180473">
    <property type="protein sequence ID" value="AAF29827.1"/>
    <property type="molecule type" value="mRNA"/>
</dbReference>
<dbReference type="EMBL" id="AF113226">
    <property type="protein sequence ID" value="AAG39297.1"/>
    <property type="molecule type" value="mRNA"/>
</dbReference>
<dbReference type="EMBL" id="AF161480">
    <property type="protein sequence ID" value="AAF29095.1"/>
    <property type="status" value="ALT_FRAME"/>
    <property type="molecule type" value="mRNA"/>
</dbReference>
<dbReference type="EMBL" id="AK000662">
    <property type="protein sequence ID" value="BAA91313.1"/>
    <property type="molecule type" value="mRNA"/>
</dbReference>
<dbReference type="EMBL" id="AL137674">
    <property type="protein sequence ID" value="CAB70869.1"/>
    <property type="molecule type" value="mRNA"/>
</dbReference>
<dbReference type="EMBL" id="BX641116">
    <property type="protein sequence ID" value="CAE46054.1"/>
    <property type="molecule type" value="mRNA"/>
</dbReference>
<dbReference type="EMBL" id="BC002597">
    <property type="protein sequence ID" value="AAH02597.1"/>
    <property type="molecule type" value="mRNA"/>
</dbReference>
<dbReference type="EMBL" id="BC011826">
    <property type="protein sequence ID" value="AAH11826.1"/>
    <property type="molecule type" value="mRNA"/>
</dbReference>
<dbReference type="EMBL" id="AF044215">
    <property type="protein sequence ID" value="AAQ13426.1"/>
    <property type="status" value="ALT_FRAME"/>
    <property type="molecule type" value="mRNA"/>
</dbReference>
<dbReference type="CCDS" id="CCDS31857.1">
    <molecule id="Q9NZN8-1"/>
</dbReference>
<dbReference type="PIR" id="T46494">
    <property type="entry name" value="T46494"/>
</dbReference>
<dbReference type="RefSeq" id="NP_001186231.1">
    <molecule id="Q9NZN8-1"/>
    <property type="nucleotide sequence ID" value="NM_001199302.2"/>
</dbReference>
<dbReference type="RefSeq" id="NP_001186232.1">
    <molecule id="Q9NZN8-1"/>
    <property type="nucleotide sequence ID" value="NM_001199303.2"/>
</dbReference>
<dbReference type="RefSeq" id="NP_001401580.1">
    <molecule id="Q9NZN8-1"/>
    <property type="nucleotide sequence ID" value="NM_001414651.1"/>
</dbReference>
<dbReference type="RefSeq" id="NP_055330.1">
    <molecule id="Q9NZN8-1"/>
    <property type="nucleotide sequence ID" value="NM_014515.7"/>
</dbReference>
<dbReference type="RefSeq" id="XP_011536701.1">
    <property type="nucleotide sequence ID" value="XM_011538399.1"/>
</dbReference>
<dbReference type="PDB" id="4C0D">
    <property type="method" value="X-ray"/>
    <property type="resolution" value="3.20 A"/>
    <property type="chains" value="B=344-540"/>
</dbReference>
<dbReference type="PDB" id="4C0F">
    <property type="method" value="X-ray"/>
    <property type="resolution" value="2.40 A"/>
    <property type="chains" value="A/B/C/D=429-540"/>
</dbReference>
<dbReference type="PDB" id="5FU6">
    <property type="method" value="X-ray"/>
    <property type="resolution" value="2.90 A"/>
    <property type="chains" value="B/E=350-540"/>
</dbReference>
<dbReference type="PDB" id="5FU7">
    <property type="method" value="X-ray"/>
    <property type="resolution" value="3.10 A"/>
    <property type="chains" value="B/F=350-540"/>
</dbReference>
<dbReference type="PDBsum" id="4C0D"/>
<dbReference type="PDBsum" id="4C0F"/>
<dbReference type="PDBsum" id="5FU6"/>
<dbReference type="PDBsum" id="5FU7"/>
<dbReference type="SMR" id="Q9NZN8"/>
<dbReference type="BioGRID" id="110910">
    <property type="interactions" value="187"/>
</dbReference>
<dbReference type="ComplexPortal" id="CPX-2522">
    <property type="entry name" value="CCR4-NOT mRNA deadenylase complex, CNOT6L-CNOT7 variant"/>
</dbReference>
<dbReference type="ComplexPortal" id="CPX-2535">
    <property type="entry name" value="CCR4-NOT mRNA deadenylase complex, CNOT6L-CNOT8 variant"/>
</dbReference>
<dbReference type="ComplexPortal" id="CPX-2849">
    <property type="entry name" value="CCR4-NOT mRNA deadenylase complex, CNOT6-CNOT8 variant"/>
</dbReference>
<dbReference type="ComplexPortal" id="CPX-707">
    <property type="entry name" value="CCR4-NOT mRNA deadenylase complex, CNOT6-CNOT7 variant"/>
</dbReference>
<dbReference type="CORUM" id="Q9NZN8"/>
<dbReference type="DIP" id="DIP-42656N"/>
<dbReference type="FunCoup" id="Q9NZN8">
    <property type="interactions" value="3911"/>
</dbReference>
<dbReference type="IntAct" id="Q9NZN8">
    <property type="interactions" value="120"/>
</dbReference>
<dbReference type="MINT" id="Q9NZN8"/>
<dbReference type="STRING" id="9606.ENSP00000229195"/>
<dbReference type="ChEMBL" id="CHEMBL4105920"/>
<dbReference type="GlyCosmos" id="Q9NZN8">
    <property type="glycosylation" value="2 sites, 1 glycan"/>
</dbReference>
<dbReference type="GlyGen" id="Q9NZN8">
    <property type="glycosylation" value="13 sites, 2 N-linked glycans (2 sites), 1 O-linked glycan (11 sites)"/>
</dbReference>
<dbReference type="iPTMnet" id="Q9NZN8"/>
<dbReference type="MetOSite" id="Q9NZN8"/>
<dbReference type="PhosphoSitePlus" id="Q9NZN8"/>
<dbReference type="BioMuta" id="CNOT2"/>
<dbReference type="DMDM" id="46396017"/>
<dbReference type="jPOST" id="Q9NZN8"/>
<dbReference type="MassIVE" id="Q9NZN8"/>
<dbReference type="PaxDb" id="9606-ENSP00000229195"/>
<dbReference type="PeptideAtlas" id="Q9NZN8"/>
<dbReference type="ProteomicsDB" id="83462">
    <molecule id="Q9NZN8-1"/>
</dbReference>
<dbReference type="ProteomicsDB" id="83463">
    <molecule id="Q9NZN8-2"/>
</dbReference>
<dbReference type="ProteomicsDB" id="83464">
    <molecule id="Q9NZN8-3"/>
</dbReference>
<dbReference type="ProteomicsDB" id="83465">
    <molecule id="Q9NZN8-4"/>
</dbReference>
<dbReference type="ProteomicsDB" id="83466">
    <molecule id="Q9NZN8-5"/>
</dbReference>
<dbReference type="Pumba" id="Q9NZN8"/>
<dbReference type="Antibodypedia" id="17029">
    <property type="antibodies" value="441 antibodies from 33 providers"/>
</dbReference>
<dbReference type="DNASU" id="4848"/>
<dbReference type="Ensembl" id="ENST00000229195.8">
    <molecule id="Q9NZN8-1"/>
    <property type="protein sequence ID" value="ENSP00000229195.3"/>
    <property type="gene ID" value="ENSG00000111596.14"/>
</dbReference>
<dbReference type="Ensembl" id="ENST00000418359.7">
    <molecule id="Q9NZN8-1"/>
    <property type="protein sequence ID" value="ENSP00000412091.3"/>
    <property type="gene ID" value="ENSG00000111596.14"/>
</dbReference>
<dbReference type="Ensembl" id="ENST00000551043.5">
    <molecule id="Q9NZN8-1"/>
    <property type="protein sequence ID" value="ENSP00000449260.1"/>
    <property type="gene ID" value="ENSG00000111596.14"/>
</dbReference>
<dbReference type="Ensembl" id="ENST00000551483.5">
    <molecule id="Q9NZN8-3"/>
    <property type="protein sequence ID" value="ENSP00000448883.1"/>
    <property type="gene ID" value="ENSG00000111596.14"/>
</dbReference>
<dbReference type="GeneID" id="4848"/>
<dbReference type="KEGG" id="hsa:4848"/>
<dbReference type="MANE-Select" id="ENST00000229195.8">
    <property type="protein sequence ID" value="ENSP00000229195.3"/>
    <property type="RefSeq nucleotide sequence ID" value="NM_014515.7"/>
    <property type="RefSeq protein sequence ID" value="NP_055330.1"/>
</dbReference>
<dbReference type="UCSC" id="uc001svv.4">
    <molecule id="Q9NZN8-1"/>
    <property type="organism name" value="human"/>
</dbReference>
<dbReference type="AGR" id="HGNC:7878"/>
<dbReference type="CTD" id="4848"/>
<dbReference type="DisGeNET" id="4848"/>
<dbReference type="GeneCards" id="CNOT2"/>
<dbReference type="HGNC" id="HGNC:7878">
    <property type="gene designation" value="CNOT2"/>
</dbReference>
<dbReference type="HPA" id="ENSG00000111596">
    <property type="expression patterns" value="Low tissue specificity"/>
</dbReference>
<dbReference type="MalaCards" id="CNOT2"/>
<dbReference type="MIM" id="604909">
    <property type="type" value="gene"/>
</dbReference>
<dbReference type="MIM" id="618608">
    <property type="type" value="phenotype"/>
</dbReference>
<dbReference type="neXtProt" id="NX_Q9NZN8"/>
<dbReference type="OpenTargets" id="ENSG00000111596"/>
<dbReference type="Orphanet" id="289513">
    <property type="disease" value="12q15q21.1 microdeletion syndrome"/>
</dbReference>
<dbReference type="PharmGKB" id="PA26673"/>
<dbReference type="VEuPathDB" id="HostDB:ENSG00000111596"/>
<dbReference type="eggNOG" id="KOG2151">
    <property type="taxonomic scope" value="Eukaryota"/>
</dbReference>
<dbReference type="GeneTree" id="ENSGT00390000001285"/>
<dbReference type="HOGENOM" id="CLU_033275_1_0_1"/>
<dbReference type="InParanoid" id="Q9NZN8"/>
<dbReference type="OMA" id="DYHDESL"/>
<dbReference type="OrthoDB" id="25391at2759"/>
<dbReference type="PAN-GO" id="Q9NZN8">
    <property type="GO annotations" value="4 GO annotations based on evolutionary models"/>
</dbReference>
<dbReference type="PhylomeDB" id="Q9NZN8"/>
<dbReference type="TreeFam" id="TF313102"/>
<dbReference type="PathwayCommons" id="Q9NZN8"/>
<dbReference type="Reactome" id="R-HSA-429947">
    <property type="pathway name" value="Deadenylation of mRNA"/>
</dbReference>
<dbReference type="Reactome" id="R-HSA-6804115">
    <property type="pathway name" value="TP53 regulates transcription of additional cell cycle genes whose exact role in the p53 pathway remain uncertain"/>
</dbReference>
<dbReference type="Reactome" id="R-HSA-9820841">
    <property type="pathway name" value="M-decay: degradation of maternal mRNAs by maternally stored factors"/>
</dbReference>
<dbReference type="SignaLink" id="Q9NZN8"/>
<dbReference type="SIGNOR" id="Q9NZN8"/>
<dbReference type="BioGRID-ORCS" id="4848">
    <property type="hits" value="311 hits in 1167 CRISPR screens"/>
</dbReference>
<dbReference type="CD-CODE" id="232F8A39">
    <property type="entry name" value="P-body"/>
</dbReference>
<dbReference type="CD-CODE" id="DEE660B4">
    <property type="entry name" value="Stress granule"/>
</dbReference>
<dbReference type="ChiTaRS" id="CNOT2">
    <property type="organism name" value="human"/>
</dbReference>
<dbReference type="EvolutionaryTrace" id="Q9NZN8"/>
<dbReference type="GeneWiki" id="CNOT2"/>
<dbReference type="GenomeRNAi" id="4848"/>
<dbReference type="Pharos" id="Q9NZN8">
    <property type="development level" value="Tbio"/>
</dbReference>
<dbReference type="PRO" id="PR:Q9NZN8"/>
<dbReference type="Proteomes" id="UP000005640">
    <property type="component" value="Chromosome 12"/>
</dbReference>
<dbReference type="RNAct" id="Q9NZN8">
    <property type="molecule type" value="protein"/>
</dbReference>
<dbReference type="Bgee" id="ENSG00000111596">
    <property type="expression patterns" value="Expressed in oocyte and 215 other cell types or tissues"/>
</dbReference>
<dbReference type="ExpressionAtlas" id="Q9NZN8">
    <property type="expression patterns" value="baseline and differential"/>
</dbReference>
<dbReference type="GO" id="GO:0030014">
    <property type="term" value="C:CCR4-NOT complex"/>
    <property type="evidence" value="ECO:0000314"/>
    <property type="project" value="UniProtKB"/>
</dbReference>
<dbReference type="GO" id="GO:0030015">
    <property type="term" value="C:CCR4-NOT core complex"/>
    <property type="evidence" value="ECO:0000318"/>
    <property type="project" value="GO_Central"/>
</dbReference>
<dbReference type="GO" id="GO:0005737">
    <property type="term" value="C:cytoplasm"/>
    <property type="evidence" value="ECO:0000314"/>
    <property type="project" value="UniProtKB"/>
</dbReference>
<dbReference type="GO" id="GO:0005829">
    <property type="term" value="C:cytosol"/>
    <property type="evidence" value="ECO:0000314"/>
    <property type="project" value="HPA"/>
</dbReference>
<dbReference type="GO" id="GO:0016020">
    <property type="term" value="C:membrane"/>
    <property type="evidence" value="ECO:0007005"/>
    <property type="project" value="UniProtKB"/>
</dbReference>
<dbReference type="GO" id="GO:0005654">
    <property type="term" value="C:nucleoplasm"/>
    <property type="evidence" value="ECO:0000314"/>
    <property type="project" value="HPA"/>
</dbReference>
<dbReference type="GO" id="GO:0005634">
    <property type="term" value="C:nucleus"/>
    <property type="evidence" value="ECO:0000303"/>
    <property type="project" value="UniProtKB"/>
</dbReference>
<dbReference type="GO" id="GO:0000932">
    <property type="term" value="C:P-body"/>
    <property type="evidence" value="ECO:0000318"/>
    <property type="project" value="GO_Central"/>
</dbReference>
<dbReference type="GO" id="GO:0005886">
    <property type="term" value="C:plasma membrane"/>
    <property type="evidence" value="ECO:0000314"/>
    <property type="project" value="HPA"/>
</dbReference>
<dbReference type="GO" id="GO:0003712">
    <property type="term" value="F:transcription coregulator activity"/>
    <property type="evidence" value="ECO:0000304"/>
    <property type="project" value="UniProtKB"/>
</dbReference>
<dbReference type="GO" id="GO:0001222">
    <property type="term" value="F:transcription corepressor binding"/>
    <property type="evidence" value="ECO:0000314"/>
    <property type="project" value="UniProtKB"/>
</dbReference>
<dbReference type="GO" id="GO:0033147">
    <property type="term" value="P:negative regulation of intracellular estrogen receptor signaling pathway"/>
    <property type="evidence" value="ECO:0000315"/>
    <property type="project" value="UniProtKB"/>
</dbReference>
<dbReference type="GO" id="GO:0000122">
    <property type="term" value="P:negative regulation of transcription by RNA polymerase II"/>
    <property type="evidence" value="ECO:0000314"/>
    <property type="project" value="UniProtKB"/>
</dbReference>
<dbReference type="GO" id="GO:0000289">
    <property type="term" value="P:nuclear-transcribed mRNA poly(A) tail shortening"/>
    <property type="evidence" value="ECO:0000318"/>
    <property type="project" value="GO_Central"/>
</dbReference>
<dbReference type="GO" id="GO:0010606">
    <property type="term" value="P:positive regulation of cytoplasmic mRNA processing body assembly"/>
    <property type="evidence" value="ECO:0000315"/>
    <property type="project" value="UniProtKB"/>
</dbReference>
<dbReference type="GO" id="GO:2000036">
    <property type="term" value="P:regulation of stem cell population maintenance"/>
    <property type="evidence" value="ECO:0000315"/>
    <property type="project" value="UniProtKB"/>
</dbReference>
<dbReference type="GO" id="GO:0006357">
    <property type="term" value="P:regulation of transcription by RNA polymerase II"/>
    <property type="evidence" value="ECO:0000303"/>
    <property type="project" value="UniProtKB"/>
</dbReference>
<dbReference type="GO" id="GO:0006417">
    <property type="term" value="P:regulation of translation"/>
    <property type="evidence" value="ECO:0007669"/>
    <property type="project" value="UniProtKB-KW"/>
</dbReference>
<dbReference type="GO" id="GO:0031047">
    <property type="term" value="P:regulatory ncRNA-mediated gene silencing"/>
    <property type="evidence" value="ECO:0007669"/>
    <property type="project" value="UniProtKB-KW"/>
</dbReference>
<dbReference type="GO" id="GO:0001829">
    <property type="term" value="P:trophectodermal cell differentiation"/>
    <property type="evidence" value="ECO:0007669"/>
    <property type="project" value="Ensembl"/>
</dbReference>
<dbReference type="FunFam" id="2.30.30.1020:FF:000001">
    <property type="entry name" value="Putative CCR4-NOT transcription complex subunit 2"/>
    <property type="match status" value="1"/>
</dbReference>
<dbReference type="Gene3D" id="2.30.30.1020">
    <property type="entry name" value="CCR4-NOT complex subunit 2/3/5, C-terminal domain"/>
    <property type="match status" value="1"/>
</dbReference>
<dbReference type="IDEAL" id="IID00503"/>
<dbReference type="InterPro" id="IPR038635">
    <property type="entry name" value="CCR4-NOT_su2/3/5_C_sf"/>
</dbReference>
<dbReference type="InterPro" id="IPR040168">
    <property type="entry name" value="Not2/3/5"/>
</dbReference>
<dbReference type="InterPro" id="IPR007282">
    <property type="entry name" value="NOT2/3/5_C"/>
</dbReference>
<dbReference type="PANTHER" id="PTHR23326">
    <property type="entry name" value="CCR4 NOT-RELATED"/>
    <property type="match status" value="1"/>
</dbReference>
<dbReference type="Pfam" id="PF04153">
    <property type="entry name" value="NOT2_3_5_C"/>
    <property type="match status" value="1"/>
</dbReference>
<proteinExistence type="evidence at protein level"/>
<feature type="chain" id="PRO_0000198331" description="CCR4-NOT transcription complex subunit 2">
    <location>
        <begin position="1"/>
        <end position="540"/>
    </location>
</feature>
<feature type="region of interest" description="Disordered" evidence="2">
    <location>
        <begin position="96"/>
        <end position="126"/>
    </location>
</feature>
<feature type="region of interest" description="Disordered" evidence="2">
    <location>
        <begin position="276"/>
        <end position="342"/>
    </location>
</feature>
<feature type="region of interest" description="Repressor domain">
    <location>
        <begin position="437"/>
        <end position="540"/>
    </location>
</feature>
<feature type="compositionally biased region" description="Polar residues" evidence="2">
    <location>
        <begin position="96"/>
        <end position="123"/>
    </location>
</feature>
<feature type="compositionally biased region" description="Polar residues" evidence="2">
    <location>
        <begin position="289"/>
        <end position="313"/>
    </location>
</feature>
<feature type="compositionally biased region" description="Polar residues" evidence="2">
    <location>
        <begin position="321"/>
        <end position="333"/>
    </location>
</feature>
<feature type="modified residue" description="Phosphothreonine" evidence="16">
    <location>
        <position position="93"/>
    </location>
</feature>
<feature type="modified residue" description="Phosphoserine" evidence="16 18">
    <location>
        <position position="126"/>
    </location>
</feature>
<feature type="modified residue" description="Phosphoserine" evidence="1">
    <location>
        <position position="157"/>
    </location>
</feature>
<feature type="modified residue" description="Phosphoserine" evidence="16 17 19 20 21 22">
    <location>
        <position position="165"/>
    </location>
</feature>
<feature type="modified residue" description="Phosphoserine" evidence="1">
    <location>
        <position position="169"/>
    </location>
</feature>
<feature type="modified residue" description="Phosphoserine" evidence="21">
    <location>
        <position position="242"/>
    </location>
</feature>
<feature type="modified residue" description="Phosphoserine" evidence="22">
    <location>
        <position position="274"/>
    </location>
</feature>
<feature type="splice variant" id="VSP_009913" description="In isoform 3." evidence="12">
    <location>
        <begin position="1"/>
        <end position="349"/>
    </location>
</feature>
<feature type="splice variant" id="VSP_009912" description="In isoform 2." evidence="13">
    <location>
        <begin position="1"/>
        <end position="175"/>
    </location>
</feature>
<feature type="splice variant" id="VSP_009914" description="In isoform 5." evidence="11">
    <location>
        <begin position="229"/>
        <end position="278"/>
    </location>
</feature>
<feature type="splice variant" id="VSP_009915" description="In isoform 4." evidence="12">
    <original>FNRDWRYHKEE</original>
    <variation>YVQSILITFVL</variation>
    <location>
        <begin position="465"/>
        <end position="475"/>
    </location>
</feature>
<feature type="splice variant" id="VSP_009916" description="In isoform 4." evidence="12">
    <location>
        <begin position="476"/>
        <end position="540"/>
    </location>
</feature>
<feature type="sequence variant" id="VAR_083417" description="In IDNADFS." evidence="10">
    <location>
        <begin position="316"/>
        <end position="540"/>
    </location>
</feature>
<feature type="sequence variant" id="VAR_048750" description="In dbSNP:rs11178192.">
    <original>A</original>
    <variation>T</variation>
    <location>
        <position position="460"/>
    </location>
</feature>
<feature type="helix" evidence="25">
    <location>
        <begin position="357"/>
        <end position="366"/>
    </location>
</feature>
<feature type="helix" evidence="23">
    <location>
        <begin position="371"/>
        <end position="373"/>
    </location>
</feature>
<feature type="turn" evidence="25">
    <location>
        <begin position="376"/>
        <end position="378"/>
    </location>
</feature>
<feature type="helix" evidence="25">
    <location>
        <begin position="382"/>
        <end position="385"/>
    </location>
</feature>
<feature type="helix" evidence="25">
    <location>
        <begin position="396"/>
        <end position="398"/>
    </location>
</feature>
<feature type="turn" evidence="25">
    <location>
        <begin position="410"/>
        <end position="412"/>
    </location>
</feature>
<feature type="helix" evidence="25">
    <location>
        <begin position="419"/>
        <end position="421"/>
    </location>
</feature>
<feature type="helix" evidence="25">
    <location>
        <begin position="424"/>
        <end position="427"/>
    </location>
</feature>
<feature type="helix" evidence="24">
    <location>
        <begin position="429"/>
        <end position="432"/>
    </location>
</feature>
<feature type="helix" evidence="24">
    <location>
        <begin position="436"/>
        <end position="438"/>
    </location>
</feature>
<feature type="helix" evidence="24">
    <location>
        <begin position="441"/>
        <end position="449"/>
    </location>
</feature>
<feature type="helix" evidence="24">
    <location>
        <begin position="453"/>
        <end position="466"/>
    </location>
</feature>
<feature type="strand" evidence="24">
    <location>
        <begin position="470"/>
        <end position="472"/>
    </location>
</feature>
<feature type="turn" evidence="24">
    <location>
        <begin position="473"/>
        <end position="476"/>
    </location>
</feature>
<feature type="strand" evidence="24">
    <location>
        <begin position="477"/>
        <end position="481"/>
    </location>
</feature>
<feature type="strand" evidence="24">
    <location>
        <begin position="488"/>
        <end position="490"/>
    </location>
</feature>
<feature type="strand" evidence="24">
    <location>
        <begin position="492"/>
        <end position="503"/>
    </location>
</feature>
<feature type="turn" evidence="24">
    <location>
        <begin position="504"/>
        <end position="507"/>
    </location>
</feature>
<feature type="strand" evidence="24">
    <location>
        <begin position="508"/>
        <end position="517"/>
    </location>
</feature>
<feature type="helix" evidence="24">
    <location>
        <begin position="518"/>
        <end position="520"/>
    </location>
</feature>
<feature type="helix" evidence="24">
    <location>
        <begin position="537"/>
        <end position="539"/>
    </location>
</feature>